<dbReference type="EMBL" id="U00007">
    <property type="protein sequence ID" value="AAA60487.1"/>
    <property type="molecule type" value="Genomic_DNA"/>
</dbReference>
<dbReference type="EMBL" id="U00096">
    <property type="protein sequence ID" value="AAC75185.1"/>
    <property type="molecule type" value="Genomic_DNA"/>
</dbReference>
<dbReference type="EMBL" id="AP009048">
    <property type="protein sequence ID" value="BAE76600.1"/>
    <property type="molecule type" value="Genomic_DNA"/>
</dbReference>
<dbReference type="PIR" id="C64980">
    <property type="entry name" value="C64980"/>
</dbReference>
<dbReference type="RefSeq" id="NP_416628.1">
    <property type="nucleotide sequence ID" value="NC_000913.3"/>
</dbReference>
<dbReference type="RefSeq" id="WP_000950409.1">
    <property type="nucleotide sequence ID" value="NZ_LN832404.1"/>
</dbReference>
<dbReference type="BioGRID" id="4261782">
    <property type="interactions" value="67"/>
</dbReference>
<dbReference type="FunCoup" id="P33355">
    <property type="interactions" value="11"/>
</dbReference>
<dbReference type="STRING" id="511145.b2124"/>
<dbReference type="jPOST" id="P33355"/>
<dbReference type="PaxDb" id="511145-b2124"/>
<dbReference type="EnsemblBacteria" id="AAC75185">
    <property type="protein sequence ID" value="AAC75185"/>
    <property type="gene ID" value="b2124"/>
</dbReference>
<dbReference type="GeneID" id="949026"/>
<dbReference type="KEGG" id="ecj:JW2112"/>
<dbReference type="KEGG" id="eco:b2124"/>
<dbReference type="KEGG" id="ecoc:C3026_11910"/>
<dbReference type="PATRIC" id="fig|511145.12.peg.2203"/>
<dbReference type="EchoBASE" id="EB1943"/>
<dbReference type="eggNOG" id="COG4807">
    <property type="taxonomic scope" value="Bacteria"/>
</dbReference>
<dbReference type="HOGENOM" id="CLU_087517_1_0_6"/>
<dbReference type="InParanoid" id="P33355"/>
<dbReference type="OMA" id="KEDDMHA"/>
<dbReference type="OrthoDB" id="9788465at2"/>
<dbReference type="PhylomeDB" id="P33355"/>
<dbReference type="BioCyc" id="EcoCyc:EG12005-MONOMER"/>
<dbReference type="PRO" id="PR:P33355"/>
<dbReference type="Proteomes" id="UP000000625">
    <property type="component" value="Chromosome"/>
</dbReference>
<dbReference type="InterPro" id="IPR009921">
    <property type="entry name" value="YehS-like"/>
</dbReference>
<dbReference type="PANTHER" id="PTHR37805:SF1">
    <property type="entry name" value="CYTOPLASMIC PROTEIN"/>
    <property type="match status" value="1"/>
</dbReference>
<dbReference type="PANTHER" id="PTHR37805">
    <property type="entry name" value="CYTOPLASMIC PROTEIN-RELATED"/>
    <property type="match status" value="1"/>
</dbReference>
<dbReference type="Pfam" id="PF07308">
    <property type="entry name" value="DUF1456"/>
    <property type="match status" value="2"/>
</dbReference>
<organism>
    <name type="scientific">Escherichia coli (strain K12)</name>
    <dbReference type="NCBI Taxonomy" id="83333"/>
    <lineage>
        <taxon>Bacteria</taxon>
        <taxon>Pseudomonadati</taxon>
        <taxon>Pseudomonadota</taxon>
        <taxon>Gammaproteobacteria</taxon>
        <taxon>Enterobacterales</taxon>
        <taxon>Enterobacteriaceae</taxon>
        <taxon>Escherichia</taxon>
    </lineage>
</organism>
<keyword id="KW-1185">Reference proteome</keyword>
<feature type="chain" id="PRO_0000169137" description="Uncharacterized protein YehS">
    <location>
        <begin position="1"/>
        <end position="156"/>
    </location>
</feature>
<accession>P33355</accession>
<accession>Q2MAV6</accession>
<name>YEHS_ECOLI</name>
<sequence length="156" mass="17973">MLSNDILRSVRYILKANNNDLVRILALGNVEATAEQIAVWLRKEDEEGFQRCPDIVLSSFLNGLIYEKRGKDESAPALEPERRINNNIVLKKLRIAFSLKTDDILAILTEQQFRVSMPEITAMMRAPDHKNFRECGDQFLRYFLRGLAARQHVKKG</sequence>
<gene>
    <name type="primary">yehS</name>
    <name type="ordered locus">b2124</name>
    <name type="ordered locus">JW2112</name>
</gene>
<proteinExistence type="predicted"/>
<protein>
    <recommendedName>
        <fullName>Uncharacterized protein YehS</fullName>
    </recommendedName>
</protein>
<reference key="1">
    <citation type="submission" date="1993-10" db="EMBL/GenBank/DDBJ databases">
        <title>Automated multiplex sequencing of the E.coli genome.</title>
        <authorList>
            <person name="Richterich P."/>
            <person name="Lakey N."/>
            <person name="Gryan G."/>
            <person name="Jaehn L."/>
            <person name="Mintz L."/>
            <person name="Robison K."/>
            <person name="Church G.M."/>
        </authorList>
    </citation>
    <scope>NUCLEOTIDE SEQUENCE [LARGE SCALE GENOMIC DNA]</scope>
    <source>
        <strain>K12 / BHB2600</strain>
    </source>
</reference>
<reference key="2">
    <citation type="journal article" date="1997" name="Science">
        <title>The complete genome sequence of Escherichia coli K-12.</title>
        <authorList>
            <person name="Blattner F.R."/>
            <person name="Plunkett G. III"/>
            <person name="Bloch C.A."/>
            <person name="Perna N.T."/>
            <person name="Burland V."/>
            <person name="Riley M."/>
            <person name="Collado-Vides J."/>
            <person name="Glasner J.D."/>
            <person name="Rode C.K."/>
            <person name="Mayhew G.F."/>
            <person name="Gregor J."/>
            <person name="Davis N.W."/>
            <person name="Kirkpatrick H.A."/>
            <person name="Goeden M.A."/>
            <person name="Rose D.J."/>
            <person name="Mau B."/>
            <person name="Shao Y."/>
        </authorList>
    </citation>
    <scope>NUCLEOTIDE SEQUENCE [LARGE SCALE GENOMIC DNA]</scope>
    <source>
        <strain>K12 / MG1655 / ATCC 47076</strain>
    </source>
</reference>
<reference key="3">
    <citation type="journal article" date="2006" name="Mol. Syst. Biol.">
        <title>Highly accurate genome sequences of Escherichia coli K-12 strains MG1655 and W3110.</title>
        <authorList>
            <person name="Hayashi K."/>
            <person name="Morooka N."/>
            <person name="Yamamoto Y."/>
            <person name="Fujita K."/>
            <person name="Isono K."/>
            <person name="Choi S."/>
            <person name="Ohtsubo E."/>
            <person name="Baba T."/>
            <person name="Wanner B.L."/>
            <person name="Mori H."/>
            <person name="Horiuchi T."/>
        </authorList>
    </citation>
    <scope>NUCLEOTIDE SEQUENCE [LARGE SCALE GENOMIC DNA]</scope>
    <source>
        <strain>K12 / W3110 / ATCC 27325 / DSM 5911</strain>
    </source>
</reference>